<evidence type="ECO:0000250" key="1"/>
<evidence type="ECO:0000255" key="2"/>
<evidence type="ECO:0000269" key="3">
    <source>
    </source>
</evidence>
<evidence type="ECO:0000269" key="4">
    <source>
    </source>
</evidence>
<evidence type="ECO:0000305" key="5"/>
<organism>
    <name type="scientific">Bombina maxima</name>
    <name type="common">Giant fire-bellied toad</name>
    <name type="synonym">Chinese red belly toad</name>
    <dbReference type="NCBI Taxonomy" id="161274"/>
    <lineage>
        <taxon>Eukaryota</taxon>
        <taxon>Metazoa</taxon>
        <taxon>Chordata</taxon>
        <taxon>Craniata</taxon>
        <taxon>Vertebrata</taxon>
        <taxon>Euteleostomi</taxon>
        <taxon>Amphibia</taxon>
        <taxon>Batrachia</taxon>
        <taxon>Anura</taxon>
        <taxon>Bombinatoridae</taxon>
        <taxon>Bombina</taxon>
    </lineage>
</organism>
<reference key="1">
    <citation type="journal article" date="2005" name="Eur. J. Immunol.">
        <title>Variety of antimicrobial peptides in the Bombina maxima toad and evidence of their rapid diversification.</title>
        <authorList>
            <person name="Lee W.-H."/>
            <person name="Li Y."/>
            <person name="Lai R."/>
            <person name="Li S."/>
            <person name="Zhang Y."/>
            <person name="Wang W."/>
        </authorList>
    </citation>
    <scope>NUCLEOTIDE SEQUENCE [MRNA]</scope>
    <scope>PROTEIN SEQUENCE OF 45-71 AND 125-144</scope>
    <scope>AMIDATION AT ILE-144</scope>
    <scope>MASS SPECTROMETRY</scope>
    <source>
        <tissue>Skin</tissue>
    </source>
</reference>
<reference key="2">
    <citation type="journal article" date="2002" name="Peptides">
        <title>Antimicrobial peptides from skin secretions of Chinese red belly toad Bombina maxima.</title>
        <authorList>
            <person name="Lai R."/>
            <person name="Zheng Y.-T."/>
            <person name="Shen J.-H."/>
            <person name="Liu G.-J."/>
            <person name="Liu H."/>
            <person name="Lee W.-H."/>
            <person name="Tang S.-Z."/>
            <person name="Zhang Y."/>
        </authorList>
    </citation>
    <scope>PROTEIN SEQUENCE OF 44-70</scope>
    <scope>MASS SPECTROMETRY</scope>
    <scope>FUNCTION OF MAXIMIN-3</scope>
</reference>
<proteinExistence type="evidence at protein level"/>
<sequence>MNFKYIVAVSFLIASAYARSVQNDEQSLSQRDVLEEEESLREIRGIGGKILSGLKTALKGAAKELASTYLHRKRTAEEHEVMKRLEAVMRDLDSLDYPEEASERETRGFNQDEIANLFTKKEKRILGPVLGLVGSALGGLIKKIG</sequence>
<protein>
    <recommendedName>
        <fullName>Maximins 3/H11 type 3</fullName>
    </recommendedName>
    <component>
        <recommendedName>
            <fullName>Maximin-3</fullName>
        </recommendedName>
    </component>
    <component>
        <recommendedName>
            <fullName>Maximin-H11</fullName>
        </recommendedName>
    </component>
</protein>
<keyword id="KW-0027">Amidation</keyword>
<keyword id="KW-0878">Amphibian defense peptide</keyword>
<keyword id="KW-0044">Antibiotic</keyword>
<keyword id="KW-0929">Antimicrobial</keyword>
<keyword id="KW-0165">Cleavage on pair of basic residues</keyword>
<keyword id="KW-0204">Cytolysis</keyword>
<keyword id="KW-0903">Direct protein sequencing</keyword>
<keyword id="KW-0295">Fungicide</keyword>
<keyword id="KW-0354">Hemolysis</keyword>
<keyword id="KW-0964">Secreted</keyword>
<keyword id="KW-0732">Signal</keyword>
<feature type="signal peptide" evidence="2">
    <location>
        <begin position="1"/>
        <end position="18"/>
    </location>
</feature>
<feature type="propeptide" id="PRO_0000003148" evidence="3">
    <location>
        <begin position="19"/>
        <end position="43"/>
    </location>
</feature>
<feature type="peptide" id="PRO_0000003149" description="Maximin-3">
    <location>
        <begin position="45"/>
        <end position="71"/>
    </location>
</feature>
<feature type="propeptide" id="PRO_0000003150" evidence="1">
    <location>
        <begin position="75"/>
        <end position="122"/>
    </location>
</feature>
<feature type="peptide" id="PRO_0000003151" description="Maximin-H11">
    <location>
        <begin position="125"/>
        <end position="144"/>
    </location>
</feature>
<feature type="modified residue" description="Isoleucine amide" evidence="4">
    <location>
        <position position="144"/>
    </location>
</feature>
<accession>Q58T65</accession>
<comment type="function">
    <text evidence="3">Maximin-3 shows antibacterial activity against both Gram-positive and Gram-negative bacteria. It also shows antimicrobial activity against the fungus C.albicans, but not against A.flavus nor P.uticale. It has little hemolytic activity. It possess a significant cytotoxicity against tumor cell lines. It possess a significant anti-HIV activity. It shows high spermicidal activity.</text>
</comment>
<comment type="function">
    <text evidence="1">Maximin-H11 shows antimicrobial activity against bacteria and against the fungus C.albicans. Shows strong hemolytic activity (By similarity).</text>
</comment>
<comment type="subcellular location">
    <subcellularLocation>
        <location>Secreted</location>
    </subcellularLocation>
</comment>
<comment type="tissue specificity">
    <text>Expressed by the skin glands.</text>
</comment>
<comment type="mass spectrometry">
    <molecule>Maximin-3</molecule>
</comment>
<comment type="similarity">
    <text evidence="5">Belongs to the bombinin family.</text>
</comment>
<dbReference type="EMBL" id="AY848995">
    <property type="protein sequence ID" value="AAX50216.1"/>
    <property type="molecule type" value="mRNA"/>
</dbReference>
<dbReference type="SMR" id="Q58T65"/>
<dbReference type="GO" id="GO:0005576">
    <property type="term" value="C:extracellular region"/>
    <property type="evidence" value="ECO:0007669"/>
    <property type="project" value="UniProtKB-SubCell"/>
</dbReference>
<dbReference type="GO" id="GO:0042742">
    <property type="term" value="P:defense response to bacterium"/>
    <property type="evidence" value="ECO:0007669"/>
    <property type="project" value="UniProtKB-KW"/>
</dbReference>
<dbReference type="GO" id="GO:0050832">
    <property type="term" value="P:defense response to fungus"/>
    <property type="evidence" value="ECO:0007669"/>
    <property type="project" value="UniProtKB-KW"/>
</dbReference>
<dbReference type="GO" id="GO:0031640">
    <property type="term" value="P:killing of cells of another organism"/>
    <property type="evidence" value="ECO:0007669"/>
    <property type="project" value="UniProtKB-KW"/>
</dbReference>
<dbReference type="InterPro" id="IPR007962">
    <property type="entry name" value="Bombinin"/>
</dbReference>
<dbReference type="Pfam" id="PF05298">
    <property type="entry name" value="Bombinin"/>
    <property type="match status" value="1"/>
</dbReference>
<name>M3113_BOMMX</name>